<dbReference type="EMBL" id="CP001175">
    <property type="protein sequence ID" value="ACK41163.1"/>
    <property type="molecule type" value="Genomic_DNA"/>
</dbReference>
<dbReference type="RefSeq" id="WP_003722063.1">
    <property type="nucleotide sequence ID" value="NC_011660.1"/>
</dbReference>
<dbReference type="SMR" id="B8DAT8"/>
<dbReference type="KEGG" id="lmh:LMHCC_2831"/>
<dbReference type="HOGENOM" id="CLU_140930_1_0_9"/>
<dbReference type="GO" id="GO:0043590">
    <property type="term" value="C:bacterial nucleoid"/>
    <property type="evidence" value="ECO:0007669"/>
    <property type="project" value="UniProtKB-UniRule"/>
</dbReference>
<dbReference type="GO" id="GO:0005829">
    <property type="term" value="C:cytosol"/>
    <property type="evidence" value="ECO:0007669"/>
    <property type="project" value="TreeGrafter"/>
</dbReference>
<dbReference type="GO" id="GO:0003677">
    <property type="term" value="F:DNA binding"/>
    <property type="evidence" value="ECO:0007669"/>
    <property type="project" value="UniProtKB-UniRule"/>
</dbReference>
<dbReference type="FunFam" id="3.30.1310.10:FF:000002">
    <property type="entry name" value="Nucleoid-associated protein IKC_06587"/>
    <property type="match status" value="1"/>
</dbReference>
<dbReference type="Gene3D" id="3.30.1310.10">
    <property type="entry name" value="Nucleoid-associated protein YbaB-like domain"/>
    <property type="match status" value="1"/>
</dbReference>
<dbReference type="HAMAP" id="MF_00274">
    <property type="entry name" value="DNA_YbaB_EbfC"/>
    <property type="match status" value="1"/>
</dbReference>
<dbReference type="InterPro" id="IPR036894">
    <property type="entry name" value="YbaB-like_sf"/>
</dbReference>
<dbReference type="InterPro" id="IPR004401">
    <property type="entry name" value="YbaB/EbfC"/>
</dbReference>
<dbReference type="NCBIfam" id="TIGR00103">
    <property type="entry name" value="DNA_YbaB_EbfC"/>
    <property type="match status" value="1"/>
</dbReference>
<dbReference type="PANTHER" id="PTHR33449">
    <property type="entry name" value="NUCLEOID-ASSOCIATED PROTEIN YBAB"/>
    <property type="match status" value="1"/>
</dbReference>
<dbReference type="PANTHER" id="PTHR33449:SF1">
    <property type="entry name" value="NUCLEOID-ASSOCIATED PROTEIN YBAB"/>
    <property type="match status" value="1"/>
</dbReference>
<dbReference type="Pfam" id="PF02575">
    <property type="entry name" value="YbaB_DNA_bd"/>
    <property type="match status" value="1"/>
</dbReference>
<dbReference type="PIRSF" id="PIRSF004555">
    <property type="entry name" value="UCP004555"/>
    <property type="match status" value="1"/>
</dbReference>
<dbReference type="SUPFAM" id="SSF82607">
    <property type="entry name" value="YbaB-like"/>
    <property type="match status" value="1"/>
</dbReference>
<reference key="1">
    <citation type="journal article" date="2011" name="J. Bacteriol.">
        <title>Genome sequence of lineage III Listeria monocytogenes strain HCC23.</title>
        <authorList>
            <person name="Steele C.L."/>
            <person name="Donaldson J.R."/>
            <person name="Paul D."/>
            <person name="Banes M.M."/>
            <person name="Arick T."/>
            <person name="Bridges S.M."/>
            <person name="Lawrence M.L."/>
        </authorList>
    </citation>
    <scope>NUCLEOTIDE SEQUENCE [LARGE SCALE GENOMIC DNA]</scope>
    <source>
        <strain>HCC23</strain>
    </source>
</reference>
<proteinExistence type="inferred from homology"/>
<comment type="function">
    <text evidence="1">Binds to DNA and alters its conformation. May be involved in regulation of gene expression, nucleoid organization and DNA protection.</text>
</comment>
<comment type="subunit">
    <text evidence="1">Homodimer.</text>
</comment>
<comment type="subcellular location">
    <subcellularLocation>
        <location evidence="1">Cytoplasm</location>
        <location evidence="1">Nucleoid</location>
    </subcellularLocation>
</comment>
<comment type="similarity">
    <text evidence="1">Belongs to the YbaB/EbfC family.</text>
</comment>
<name>Y2831_LISMH</name>
<evidence type="ECO:0000255" key="1">
    <source>
        <dbReference type="HAMAP-Rule" id="MF_00274"/>
    </source>
</evidence>
<evidence type="ECO:0000256" key="2">
    <source>
        <dbReference type="SAM" id="MobiDB-lite"/>
    </source>
</evidence>
<keyword id="KW-0963">Cytoplasm</keyword>
<keyword id="KW-0238">DNA-binding</keyword>
<organism>
    <name type="scientific">Listeria monocytogenes serotype 4a (strain HCC23)</name>
    <dbReference type="NCBI Taxonomy" id="552536"/>
    <lineage>
        <taxon>Bacteria</taxon>
        <taxon>Bacillati</taxon>
        <taxon>Bacillota</taxon>
        <taxon>Bacilli</taxon>
        <taxon>Bacillales</taxon>
        <taxon>Listeriaceae</taxon>
        <taxon>Listeria</taxon>
    </lineage>
</organism>
<gene>
    <name type="ordered locus">LMHCC_2831</name>
</gene>
<protein>
    <recommendedName>
        <fullName evidence="1">Nucleoid-associated protein LMHCC_2831</fullName>
    </recommendedName>
</protein>
<sequence>MRGMGNMQGMMKQMQKMQKEMAKAQADLEAQEFTGTAGGGMVTVKATGKRVITDVVINEEVVDPEDIEMLQDLVLAATNDVLKQIEDTTSQTMGKFTQGLNIPGM</sequence>
<accession>B8DAT8</accession>
<feature type="chain" id="PRO_1000197664" description="Nucleoid-associated protein LMHCC_2831">
    <location>
        <begin position="1"/>
        <end position="105"/>
    </location>
</feature>
<feature type="region of interest" description="Disordered" evidence="2">
    <location>
        <begin position="1"/>
        <end position="23"/>
    </location>
</feature>
<feature type="compositionally biased region" description="Low complexity" evidence="2">
    <location>
        <begin position="1"/>
        <end position="16"/>
    </location>
</feature>